<organism>
    <name type="scientific">Yersinia pseudotuberculosis serotype IB (strain PB1/+)</name>
    <dbReference type="NCBI Taxonomy" id="502801"/>
    <lineage>
        <taxon>Bacteria</taxon>
        <taxon>Pseudomonadati</taxon>
        <taxon>Pseudomonadota</taxon>
        <taxon>Gammaproteobacteria</taxon>
        <taxon>Enterobacterales</taxon>
        <taxon>Yersiniaceae</taxon>
        <taxon>Yersinia</taxon>
    </lineage>
</organism>
<name>PFKA_YERPB</name>
<reference key="1">
    <citation type="submission" date="2008-04" db="EMBL/GenBank/DDBJ databases">
        <title>Complete sequence of Yersinia pseudotuberculosis PB1/+.</title>
        <authorList>
            <person name="Copeland A."/>
            <person name="Lucas S."/>
            <person name="Lapidus A."/>
            <person name="Glavina del Rio T."/>
            <person name="Dalin E."/>
            <person name="Tice H."/>
            <person name="Bruce D."/>
            <person name="Goodwin L."/>
            <person name="Pitluck S."/>
            <person name="Munk A.C."/>
            <person name="Brettin T."/>
            <person name="Detter J.C."/>
            <person name="Han C."/>
            <person name="Tapia R."/>
            <person name="Schmutz J."/>
            <person name="Larimer F."/>
            <person name="Land M."/>
            <person name="Hauser L."/>
            <person name="Challacombe J.F."/>
            <person name="Green L."/>
            <person name="Lindler L.E."/>
            <person name="Nikolich M.P."/>
            <person name="Richardson P."/>
        </authorList>
    </citation>
    <scope>NUCLEOTIDE SEQUENCE [LARGE SCALE GENOMIC DNA]</scope>
    <source>
        <strain>PB1/+</strain>
    </source>
</reference>
<proteinExistence type="inferred from homology"/>
<accession>B2JZA3</accession>
<comment type="function">
    <text evidence="1">Catalyzes the phosphorylation of D-fructose 6-phosphate to fructose 1,6-bisphosphate by ATP, the first committing step of glycolysis.</text>
</comment>
<comment type="catalytic activity">
    <reaction evidence="1">
        <text>beta-D-fructose 6-phosphate + ATP = beta-D-fructose 1,6-bisphosphate + ADP + H(+)</text>
        <dbReference type="Rhea" id="RHEA:16109"/>
        <dbReference type="ChEBI" id="CHEBI:15378"/>
        <dbReference type="ChEBI" id="CHEBI:30616"/>
        <dbReference type="ChEBI" id="CHEBI:32966"/>
        <dbReference type="ChEBI" id="CHEBI:57634"/>
        <dbReference type="ChEBI" id="CHEBI:456216"/>
        <dbReference type="EC" id="2.7.1.11"/>
    </reaction>
</comment>
<comment type="cofactor">
    <cofactor evidence="1">
        <name>Mg(2+)</name>
        <dbReference type="ChEBI" id="CHEBI:18420"/>
    </cofactor>
</comment>
<comment type="activity regulation">
    <text evidence="1">Allosterically activated by ADP and other diphosphonucleosides, and allosterically inhibited by phosphoenolpyruvate.</text>
</comment>
<comment type="pathway">
    <text evidence="1">Carbohydrate degradation; glycolysis; D-glyceraldehyde 3-phosphate and glycerone phosphate from D-glucose: step 3/4.</text>
</comment>
<comment type="subunit">
    <text evidence="1">Homotetramer.</text>
</comment>
<comment type="subcellular location">
    <subcellularLocation>
        <location evidence="1">Cytoplasm</location>
    </subcellularLocation>
</comment>
<comment type="similarity">
    <text evidence="1">Belongs to the phosphofructokinase type A (PFKA) family. ATP-dependent PFK group I subfamily. Prokaryotic clade 'B1' sub-subfamily.</text>
</comment>
<dbReference type="EC" id="2.7.1.11" evidence="1"/>
<dbReference type="EMBL" id="CP001048">
    <property type="protein sequence ID" value="ACC87076.1"/>
    <property type="molecule type" value="Genomic_DNA"/>
</dbReference>
<dbReference type="RefSeq" id="WP_011191458.1">
    <property type="nucleotide sequence ID" value="NZ_CP009780.1"/>
</dbReference>
<dbReference type="SMR" id="B2JZA3"/>
<dbReference type="GeneID" id="49787956"/>
<dbReference type="KEGG" id="ypb:YPTS_0077"/>
<dbReference type="PATRIC" id="fig|502801.10.peg.3753"/>
<dbReference type="UniPathway" id="UPA00109">
    <property type="reaction ID" value="UER00182"/>
</dbReference>
<dbReference type="GO" id="GO:0005945">
    <property type="term" value="C:6-phosphofructokinase complex"/>
    <property type="evidence" value="ECO:0007669"/>
    <property type="project" value="TreeGrafter"/>
</dbReference>
<dbReference type="GO" id="GO:0003872">
    <property type="term" value="F:6-phosphofructokinase activity"/>
    <property type="evidence" value="ECO:0007669"/>
    <property type="project" value="UniProtKB-UniRule"/>
</dbReference>
<dbReference type="GO" id="GO:0016208">
    <property type="term" value="F:AMP binding"/>
    <property type="evidence" value="ECO:0007669"/>
    <property type="project" value="TreeGrafter"/>
</dbReference>
<dbReference type="GO" id="GO:0005524">
    <property type="term" value="F:ATP binding"/>
    <property type="evidence" value="ECO:0007669"/>
    <property type="project" value="UniProtKB-KW"/>
</dbReference>
<dbReference type="GO" id="GO:0070095">
    <property type="term" value="F:fructose-6-phosphate binding"/>
    <property type="evidence" value="ECO:0007669"/>
    <property type="project" value="TreeGrafter"/>
</dbReference>
<dbReference type="GO" id="GO:0042802">
    <property type="term" value="F:identical protein binding"/>
    <property type="evidence" value="ECO:0007669"/>
    <property type="project" value="TreeGrafter"/>
</dbReference>
<dbReference type="GO" id="GO:0046872">
    <property type="term" value="F:metal ion binding"/>
    <property type="evidence" value="ECO:0007669"/>
    <property type="project" value="UniProtKB-KW"/>
</dbReference>
<dbReference type="GO" id="GO:0048029">
    <property type="term" value="F:monosaccharide binding"/>
    <property type="evidence" value="ECO:0007669"/>
    <property type="project" value="TreeGrafter"/>
</dbReference>
<dbReference type="GO" id="GO:0061621">
    <property type="term" value="P:canonical glycolysis"/>
    <property type="evidence" value="ECO:0007669"/>
    <property type="project" value="TreeGrafter"/>
</dbReference>
<dbReference type="GO" id="GO:0030388">
    <property type="term" value="P:fructose 1,6-bisphosphate metabolic process"/>
    <property type="evidence" value="ECO:0007669"/>
    <property type="project" value="TreeGrafter"/>
</dbReference>
<dbReference type="GO" id="GO:0006002">
    <property type="term" value="P:fructose 6-phosphate metabolic process"/>
    <property type="evidence" value="ECO:0007669"/>
    <property type="project" value="InterPro"/>
</dbReference>
<dbReference type="FunFam" id="3.40.50.450:FF:000001">
    <property type="entry name" value="ATP-dependent 6-phosphofructokinase"/>
    <property type="match status" value="1"/>
</dbReference>
<dbReference type="FunFam" id="3.40.50.460:FF:000002">
    <property type="entry name" value="ATP-dependent 6-phosphofructokinase"/>
    <property type="match status" value="1"/>
</dbReference>
<dbReference type="Gene3D" id="3.40.50.450">
    <property type="match status" value="1"/>
</dbReference>
<dbReference type="Gene3D" id="3.40.50.460">
    <property type="entry name" value="Phosphofructokinase domain"/>
    <property type="match status" value="1"/>
</dbReference>
<dbReference type="HAMAP" id="MF_00339">
    <property type="entry name" value="Phosphofructokinase_I_B1"/>
    <property type="match status" value="1"/>
</dbReference>
<dbReference type="InterPro" id="IPR022953">
    <property type="entry name" value="ATP_PFK"/>
</dbReference>
<dbReference type="InterPro" id="IPR012003">
    <property type="entry name" value="ATP_PFK_prok-type"/>
</dbReference>
<dbReference type="InterPro" id="IPR012828">
    <property type="entry name" value="PFKA_ATP_prok"/>
</dbReference>
<dbReference type="InterPro" id="IPR015912">
    <property type="entry name" value="Phosphofructokinase_CS"/>
</dbReference>
<dbReference type="InterPro" id="IPR000023">
    <property type="entry name" value="Phosphofructokinase_dom"/>
</dbReference>
<dbReference type="InterPro" id="IPR035966">
    <property type="entry name" value="PKF_sf"/>
</dbReference>
<dbReference type="NCBIfam" id="TIGR02482">
    <property type="entry name" value="PFKA_ATP"/>
    <property type="match status" value="1"/>
</dbReference>
<dbReference type="NCBIfam" id="NF002872">
    <property type="entry name" value="PRK03202.1"/>
    <property type="match status" value="1"/>
</dbReference>
<dbReference type="PANTHER" id="PTHR13697:SF4">
    <property type="entry name" value="ATP-DEPENDENT 6-PHOSPHOFRUCTOKINASE"/>
    <property type="match status" value="1"/>
</dbReference>
<dbReference type="PANTHER" id="PTHR13697">
    <property type="entry name" value="PHOSPHOFRUCTOKINASE"/>
    <property type="match status" value="1"/>
</dbReference>
<dbReference type="Pfam" id="PF00365">
    <property type="entry name" value="PFK"/>
    <property type="match status" value="1"/>
</dbReference>
<dbReference type="PIRSF" id="PIRSF000532">
    <property type="entry name" value="ATP_PFK_prok"/>
    <property type="match status" value="1"/>
</dbReference>
<dbReference type="PRINTS" id="PR00476">
    <property type="entry name" value="PHFRCTKINASE"/>
</dbReference>
<dbReference type="SUPFAM" id="SSF53784">
    <property type="entry name" value="Phosphofructokinase"/>
    <property type="match status" value="1"/>
</dbReference>
<dbReference type="PROSITE" id="PS00433">
    <property type="entry name" value="PHOSPHOFRUCTOKINASE"/>
    <property type="match status" value="1"/>
</dbReference>
<feature type="chain" id="PRO_1000120068" description="ATP-dependent 6-phosphofructokinase">
    <location>
        <begin position="1"/>
        <end position="327"/>
    </location>
</feature>
<feature type="active site" description="Proton acceptor" evidence="1">
    <location>
        <position position="129"/>
    </location>
</feature>
<feature type="binding site" evidence="1">
    <location>
        <position position="12"/>
    </location>
    <ligand>
        <name>ATP</name>
        <dbReference type="ChEBI" id="CHEBI:30616"/>
    </ligand>
</feature>
<feature type="binding site" evidence="1">
    <location>
        <begin position="22"/>
        <end position="26"/>
    </location>
    <ligand>
        <name>ADP</name>
        <dbReference type="ChEBI" id="CHEBI:456216"/>
        <note>allosteric activator; ligand shared between dimeric partners</note>
    </ligand>
</feature>
<feature type="binding site" evidence="1">
    <location>
        <begin position="55"/>
        <end position="60"/>
    </location>
    <ligand>
        <name>ADP</name>
        <dbReference type="ChEBI" id="CHEBI:456216"/>
        <note>allosteric activator; ligand shared between dimeric partners</note>
    </ligand>
</feature>
<feature type="binding site" evidence="1">
    <location>
        <begin position="73"/>
        <end position="74"/>
    </location>
    <ligand>
        <name>ATP</name>
        <dbReference type="ChEBI" id="CHEBI:30616"/>
    </ligand>
</feature>
<feature type="binding site" evidence="1">
    <location>
        <begin position="103"/>
        <end position="106"/>
    </location>
    <ligand>
        <name>ATP</name>
        <dbReference type="ChEBI" id="CHEBI:30616"/>
    </ligand>
</feature>
<feature type="binding site" evidence="1">
    <location>
        <position position="104"/>
    </location>
    <ligand>
        <name>Mg(2+)</name>
        <dbReference type="ChEBI" id="CHEBI:18420"/>
        <note>catalytic</note>
    </ligand>
</feature>
<feature type="binding site" description="in other chain" evidence="1">
    <location>
        <begin position="127"/>
        <end position="129"/>
    </location>
    <ligand>
        <name>substrate</name>
        <note>ligand shared between dimeric partners</note>
    </ligand>
</feature>
<feature type="binding site" description="in other chain" evidence="1">
    <location>
        <position position="156"/>
    </location>
    <ligand>
        <name>ADP</name>
        <dbReference type="ChEBI" id="CHEBI:456216"/>
        <note>allosteric activator; ligand shared between dimeric partners</note>
    </ligand>
</feature>
<feature type="binding site" evidence="1">
    <location>
        <position position="164"/>
    </location>
    <ligand>
        <name>substrate</name>
        <note>ligand shared between dimeric partners</note>
    </ligand>
</feature>
<feature type="binding site" description="in other chain" evidence="1">
    <location>
        <begin position="171"/>
        <end position="173"/>
    </location>
    <ligand>
        <name>substrate</name>
        <note>ligand shared between dimeric partners</note>
    </ligand>
</feature>
<feature type="binding site" description="in other chain" evidence="1">
    <location>
        <begin position="187"/>
        <end position="189"/>
    </location>
    <ligand>
        <name>ADP</name>
        <dbReference type="ChEBI" id="CHEBI:456216"/>
        <note>allosteric activator; ligand shared between dimeric partners</note>
    </ligand>
</feature>
<feature type="binding site" description="in other chain" evidence="1">
    <location>
        <position position="213"/>
    </location>
    <ligand>
        <name>ADP</name>
        <dbReference type="ChEBI" id="CHEBI:456216"/>
        <note>allosteric activator; ligand shared between dimeric partners</note>
    </ligand>
</feature>
<feature type="binding site" description="in other chain" evidence="1">
    <location>
        <begin position="215"/>
        <end position="217"/>
    </location>
    <ligand>
        <name>ADP</name>
        <dbReference type="ChEBI" id="CHEBI:456216"/>
        <note>allosteric activator; ligand shared between dimeric partners</note>
    </ligand>
</feature>
<feature type="binding site" description="in other chain" evidence="1">
    <location>
        <position position="224"/>
    </location>
    <ligand>
        <name>substrate</name>
        <note>ligand shared between dimeric partners</note>
    </ligand>
</feature>
<feature type="binding site" evidence="1">
    <location>
        <position position="245"/>
    </location>
    <ligand>
        <name>substrate</name>
        <note>ligand shared between dimeric partners</note>
    </ligand>
</feature>
<feature type="binding site" description="in other chain" evidence="1">
    <location>
        <begin position="251"/>
        <end position="254"/>
    </location>
    <ligand>
        <name>substrate</name>
        <note>ligand shared between dimeric partners</note>
    </ligand>
</feature>
<protein>
    <recommendedName>
        <fullName evidence="1">ATP-dependent 6-phosphofructokinase</fullName>
        <shortName evidence="1">ATP-PFK</shortName>
        <shortName evidence="1">Phosphofructokinase</shortName>
        <ecNumber evidence="1">2.7.1.11</ecNumber>
    </recommendedName>
    <alternativeName>
        <fullName evidence="1">Phosphohexokinase</fullName>
    </alternativeName>
</protein>
<keyword id="KW-0021">Allosteric enzyme</keyword>
<keyword id="KW-0067">ATP-binding</keyword>
<keyword id="KW-0963">Cytoplasm</keyword>
<keyword id="KW-0324">Glycolysis</keyword>
<keyword id="KW-0418">Kinase</keyword>
<keyword id="KW-0460">Magnesium</keyword>
<keyword id="KW-0479">Metal-binding</keyword>
<keyword id="KW-0547">Nucleotide-binding</keyword>
<keyword id="KW-0808">Transferase</keyword>
<gene>
    <name evidence="1" type="primary">pfkA</name>
    <name type="ordered locus">YPTS_0077</name>
</gene>
<evidence type="ECO:0000255" key="1">
    <source>
        <dbReference type="HAMAP-Rule" id="MF_00339"/>
    </source>
</evidence>
<sequence length="327" mass="35411">MVKKIGVLTSGGDAPGMNAAIRGVVRAALSAGLDVFGIEDGYLGLYENRMKKLDRYSVSDMINRGGTFLGSARFPEFRDPEVRKVALKNMHERGIDGLVVIGGDGSYAGADLLTKEGGIHCVGLPGTIDNDVAGTDYTIGFFTALETVVEAIDRLRDTSSSHQRISIVEVMGRYCGDLTLAAAIAGGCEFIAIPEVEFKRDDLVAEIKAGIAKGKKHAIVAITEKLDDIDSLAKYIEKETGRETRGTVLGHIQRGGAPVAYDRILASRMGSYAVDLLLQDHDYKKGGFCVGVQNEKMVHELISVCIAPENKKSKFKEDWYDTAKKLF</sequence>